<organism>
    <name type="scientific">Enterobacteria phage LZ3</name>
    <name type="common">Bacteriophage LZ3</name>
    <dbReference type="NCBI Taxonomy" id="37362"/>
    <lineage>
        <taxon>Viruses</taxon>
        <taxon>Duplodnaviria</taxon>
        <taxon>Heunggongvirae</taxon>
        <taxon>Uroviricota</taxon>
        <taxon>Caudoviricetes</taxon>
        <taxon>Straboviridae</taxon>
        <taxon>Tevenvirinae</taxon>
        <taxon>Tequatrovirus</taxon>
    </lineage>
</organism>
<accession>P62766</accession>
<accession>P18788</accession>
<comment type="function">
    <text evidence="1">Anticodon nuclease cleaves the tRNA(Lys). It cleaves near a pyrimidine base to generate 2':3'-P&gt; and 5'-OH termini. Stp activates the host prrC protein probably by counteracting prr masking. Stp also inhibits EcoprrI restriction. Stp probably alters the conformation of EcoprrI and, consequently, of prrC, allowing activation of the latent anticodon nuclease. Presumably, stp evolved to offset a DNA restriction system of the host cell but was turned, eventually, against the phage as an activator of the appended tRNA restriction enzyme.</text>
</comment>
<sequence>MSNFHNEHVMQFYRNNLKTKGVFGRQ</sequence>
<feature type="peptide" id="PRO_0000164986" description="Anticodon nuclease activator">
    <location>
        <begin position="1"/>
        <end position="26"/>
    </location>
</feature>
<name>STP_BPLZ3</name>
<proteinExistence type="predicted"/>
<keyword id="KW-0378">Hydrolase</keyword>
<keyword id="KW-0540">Nuclease</keyword>
<protein>
    <recommendedName>
        <fullName>Anticodon nuclease activator</fullName>
    </recommendedName>
</protein>
<evidence type="ECO:0000269" key="1">
    <source>
    </source>
</evidence>
<gene>
    <name type="primary">stp</name>
</gene>
<reference key="1">
    <citation type="journal article" date="1995" name="J. Mol. Biol.">
        <title>Phage T4-coded Stp: double-edged effector of coupled DNA and tRNA-restriction systems.</title>
        <authorList>
            <person name="Penner M."/>
            <person name="Morad I."/>
            <person name="Snyder L."/>
            <person name="Kaufmann G."/>
        </authorList>
    </citation>
    <scope>NUCLEOTIDE SEQUENCE [GENOMIC DNA]</scope>
    <scope>FUNCTION</scope>
</reference>
<organismHost>
    <name type="scientific">Escherichia coli</name>
    <dbReference type="NCBI Taxonomy" id="562"/>
</organismHost>
<dbReference type="EMBL" id="Z46875">
    <property type="protein sequence ID" value="CAA86955.1"/>
    <property type="molecule type" value="Genomic_DNA"/>
</dbReference>
<dbReference type="PIR" id="S55797">
    <property type="entry name" value="S55797"/>
</dbReference>
<dbReference type="GO" id="GO:0004518">
    <property type="term" value="F:nuclease activity"/>
    <property type="evidence" value="ECO:0007669"/>
    <property type="project" value="UniProtKB-KW"/>
</dbReference>
<dbReference type="GO" id="GO:0050792">
    <property type="term" value="P:regulation of viral process"/>
    <property type="evidence" value="ECO:0007669"/>
    <property type="project" value="InterPro"/>
</dbReference>
<dbReference type="InterPro" id="IPR012585">
    <property type="entry name" value="Stp"/>
</dbReference>
<dbReference type="Pfam" id="PF08133">
    <property type="entry name" value="Nuclease_act"/>
    <property type="match status" value="1"/>
</dbReference>